<organism>
    <name type="scientific">Acinetobacter baumannii (strain SDF)</name>
    <dbReference type="NCBI Taxonomy" id="509170"/>
    <lineage>
        <taxon>Bacteria</taxon>
        <taxon>Pseudomonadati</taxon>
        <taxon>Pseudomonadota</taxon>
        <taxon>Gammaproteobacteria</taxon>
        <taxon>Moraxellales</taxon>
        <taxon>Moraxellaceae</taxon>
        <taxon>Acinetobacter</taxon>
        <taxon>Acinetobacter calcoaceticus/baumannii complex</taxon>
    </lineage>
</organism>
<gene>
    <name evidence="1" type="primary">adk</name>
    <name type="ordered locus">ABSDF2364</name>
</gene>
<dbReference type="EC" id="2.7.4.3" evidence="1"/>
<dbReference type="EMBL" id="CU468230">
    <property type="protein sequence ID" value="CAP01677.1"/>
    <property type="molecule type" value="Genomic_DNA"/>
</dbReference>
<dbReference type="SMR" id="B0VSA9"/>
<dbReference type="KEGG" id="abm:ABSDF2364"/>
<dbReference type="HOGENOM" id="CLU_032354_1_2_6"/>
<dbReference type="UniPathway" id="UPA00588">
    <property type="reaction ID" value="UER00649"/>
</dbReference>
<dbReference type="Proteomes" id="UP000001741">
    <property type="component" value="Chromosome"/>
</dbReference>
<dbReference type="GO" id="GO:0005737">
    <property type="term" value="C:cytoplasm"/>
    <property type="evidence" value="ECO:0007669"/>
    <property type="project" value="UniProtKB-SubCell"/>
</dbReference>
<dbReference type="GO" id="GO:0004017">
    <property type="term" value="F:adenylate kinase activity"/>
    <property type="evidence" value="ECO:0007669"/>
    <property type="project" value="UniProtKB-UniRule"/>
</dbReference>
<dbReference type="GO" id="GO:0005524">
    <property type="term" value="F:ATP binding"/>
    <property type="evidence" value="ECO:0007669"/>
    <property type="project" value="UniProtKB-UniRule"/>
</dbReference>
<dbReference type="GO" id="GO:0044209">
    <property type="term" value="P:AMP salvage"/>
    <property type="evidence" value="ECO:0007669"/>
    <property type="project" value="UniProtKB-UniRule"/>
</dbReference>
<dbReference type="CDD" id="cd01428">
    <property type="entry name" value="ADK"/>
    <property type="match status" value="1"/>
</dbReference>
<dbReference type="FunFam" id="3.40.50.300:FF:000106">
    <property type="entry name" value="Adenylate kinase mitochondrial"/>
    <property type="match status" value="1"/>
</dbReference>
<dbReference type="Gene3D" id="3.40.50.300">
    <property type="entry name" value="P-loop containing nucleotide triphosphate hydrolases"/>
    <property type="match status" value="1"/>
</dbReference>
<dbReference type="HAMAP" id="MF_00235">
    <property type="entry name" value="Adenylate_kinase_Adk"/>
    <property type="match status" value="1"/>
</dbReference>
<dbReference type="InterPro" id="IPR006259">
    <property type="entry name" value="Adenyl_kin_sub"/>
</dbReference>
<dbReference type="InterPro" id="IPR000850">
    <property type="entry name" value="Adenylat/UMP-CMP_kin"/>
</dbReference>
<dbReference type="InterPro" id="IPR033690">
    <property type="entry name" value="Adenylat_kinase_CS"/>
</dbReference>
<dbReference type="InterPro" id="IPR007862">
    <property type="entry name" value="Adenylate_kinase_lid-dom"/>
</dbReference>
<dbReference type="InterPro" id="IPR027417">
    <property type="entry name" value="P-loop_NTPase"/>
</dbReference>
<dbReference type="NCBIfam" id="TIGR01351">
    <property type="entry name" value="adk"/>
    <property type="match status" value="1"/>
</dbReference>
<dbReference type="NCBIfam" id="NF001379">
    <property type="entry name" value="PRK00279.1-1"/>
    <property type="match status" value="1"/>
</dbReference>
<dbReference type="NCBIfam" id="NF001380">
    <property type="entry name" value="PRK00279.1-2"/>
    <property type="match status" value="1"/>
</dbReference>
<dbReference type="NCBIfam" id="NF001381">
    <property type="entry name" value="PRK00279.1-3"/>
    <property type="match status" value="1"/>
</dbReference>
<dbReference type="NCBIfam" id="NF011100">
    <property type="entry name" value="PRK14527.1"/>
    <property type="match status" value="1"/>
</dbReference>
<dbReference type="PANTHER" id="PTHR23359">
    <property type="entry name" value="NUCLEOTIDE KINASE"/>
    <property type="match status" value="1"/>
</dbReference>
<dbReference type="Pfam" id="PF00406">
    <property type="entry name" value="ADK"/>
    <property type="match status" value="1"/>
</dbReference>
<dbReference type="Pfam" id="PF05191">
    <property type="entry name" value="ADK_lid"/>
    <property type="match status" value="1"/>
</dbReference>
<dbReference type="PRINTS" id="PR00094">
    <property type="entry name" value="ADENYLTKNASE"/>
</dbReference>
<dbReference type="SUPFAM" id="SSF52540">
    <property type="entry name" value="P-loop containing nucleoside triphosphate hydrolases"/>
    <property type="match status" value="1"/>
</dbReference>
<dbReference type="PROSITE" id="PS00113">
    <property type="entry name" value="ADENYLATE_KINASE"/>
    <property type="match status" value="1"/>
</dbReference>
<reference key="1">
    <citation type="journal article" date="2008" name="PLoS ONE">
        <title>Comparative analysis of Acinetobacters: three genomes for three lifestyles.</title>
        <authorList>
            <person name="Vallenet D."/>
            <person name="Nordmann P."/>
            <person name="Barbe V."/>
            <person name="Poirel L."/>
            <person name="Mangenot S."/>
            <person name="Bataille E."/>
            <person name="Dossat C."/>
            <person name="Gas S."/>
            <person name="Kreimeyer A."/>
            <person name="Lenoble P."/>
            <person name="Oztas S."/>
            <person name="Poulain J."/>
            <person name="Segurens B."/>
            <person name="Robert C."/>
            <person name="Abergel C."/>
            <person name="Claverie J.-M."/>
            <person name="Raoult D."/>
            <person name="Medigue C."/>
            <person name="Weissenbach J."/>
            <person name="Cruveiller S."/>
        </authorList>
    </citation>
    <scope>NUCLEOTIDE SEQUENCE [LARGE SCALE GENOMIC DNA]</scope>
    <source>
        <strain>SDF</strain>
    </source>
</reference>
<feature type="chain" id="PRO_1000100520" description="Adenylate kinase">
    <location>
        <begin position="1"/>
        <end position="217"/>
    </location>
</feature>
<feature type="region of interest" description="NMP" evidence="1">
    <location>
        <begin position="30"/>
        <end position="59"/>
    </location>
</feature>
<feature type="region of interest" description="LID" evidence="1">
    <location>
        <begin position="122"/>
        <end position="159"/>
    </location>
</feature>
<feature type="binding site" evidence="1">
    <location>
        <begin position="10"/>
        <end position="15"/>
    </location>
    <ligand>
        <name>ATP</name>
        <dbReference type="ChEBI" id="CHEBI:30616"/>
    </ligand>
</feature>
<feature type="binding site" evidence="1">
    <location>
        <position position="31"/>
    </location>
    <ligand>
        <name>AMP</name>
        <dbReference type="ChEBI" id="CHEBI:456215"/>
    </ligand>
</feature>
<feature type="binding site" evidence="1">
    <location>
        <position position="36"/>
    </location>
    <ligand>
        <name>AMP</name>
        <dbReference type="ChEBI" id="CHEBI:456215"/>
    </ligand>
</feature>
<feature type="binding site" evidence="1">
    <location>
        <begin position="57"/>
        <end position="59"/>
    </location>
    <ligand>
        <name>AMP</name>
        <dbReference type="ChEBI" id="CHEBI:456215"/>
    </ligand>
</feature>
<feature type="binding site" evidence="1">
    <location>
        <begin position="85"/>
        <end position="88"/>
    </location>
    <ligand>
        <name>AMP</name>
        <dbReference type="ChEBI" id="CHEBI:456215"/>
    </ligand>
</feature>
<feature type="binding site" evidence="1">
    <location>
        <position position="92"/>
    </location>
    <ligand>
        <name>AMP</name>
        <dbReference type="ChEBI" id="CHEBI:456215"/>
    </ligand>
</feature>
<feature type="binding site" evidence="1">
    <location>
        <position position="123"/>
    </location>
    <ligand>
        <name>ATP</name>
        <dbReference type="ChEBI" id="CHEBI:30616"/>
    </ligand>
</feature>
<feature type="binding site" evidence="1">
    <location>
        <begin position="132"/>
        <end position="133"/>
    </location>
    <ligand>
        <name>ATP</name>
        <dbReference type="ChEBI" id="CHEBI:30616"/>
    </ligand>
</feature>
<feature type="binding site" evidence="1">
    <location>
        <position position="156"/>
    </location>
    <ligand>
        <name>AMP</name>
        <dbReference type="ChEBI" id="CHEBI:456215"/>
    </ligand>
</feature>
<feature type="binding site" evidence="1">
    <location>
        <position position="167"/>
    </location>
    <ligand>
        <name>AMP</name>
        <dbReference type="ChEBI" id="CHEBI:456215"/>
    </ligand>
</feature>
<feature type="binding site" evidence="1">
    <location>
        <position position="202"/>
    </location>
    <ligand>
        <name>ATP</name>
        <dbReference type="ChEBI" id="CHEBI:30616"/>
    </ligand>
</feature>
<proteinExistence type="inferred from homology"/>
<name>KAD_ACIBS</name>
<evidence type="ECO:0000255" key="1">
    <source>
        <dbReference type="HAMAP-Rule" id="MF_00235"/>
    </source>
</evidence>
<keyword id="KW-0067">ATP-binding</keyword>
<keyword id="KW-0963">Cytoplasm</keyword>
<keyword id="KW-0418">Kinase</keyword>
<keyword id="KW-0545">Nucleotide biosynthesis</keyword>
<keyword id="KW-0547">Nucleotide-binding</keyword>
<keyword id="KW-0808">Transferase</keyword>
<comment type="function">
    <text evidence="1">Catalyzes the reversible transfer of the terminal phosphate group between ATP and AMP. Plays an important role in cellular energy homeostasis and in adenine nucleotide metabolism.</text>
</comment>
<comment type="catalytic activity">
    <reaction evidence="1">
        <text>AMP + ATP = 2 ADP</text>
        <dbReference type="Rhea" id="RHEA:12973"/>
        <dbReference type="ChEBI" id="CHEBI:30616"/>
        <dbReference type="ChEBI" id="CHEBI:456215"/>
        <dbReference type="ChEBI" id="CHEBI:456216"/>
        <dbReference type="EC" id="2.7.4.3"/>
    </reaction>
</comment>
<comment type="pathway">
    <text evidence="1">Purine metabolism; AMP biosynthesis via salvage pathway; AMP from ADP: step 1/1.</text>
</comment>
<comment type="subunit">
    <text evidence="1">Monomer.</text>
</comment>
<comment type="subcellular location">
    <subcellularLocation>
        <location evidence="1">Cytoplasm</location>
    </subcellularLocation>
</comment>
<comment type="domain">
    <text evidence="1">Consists of three domains, a large central CORE domain and two small peripheral domains, NMPbind and LID, which undergo movements during catalysis. The LID domain closes over the site of phosphoryl transfer upon ATP binding. Assembling and dissambling the active center during each catalytic cycle provides an effective means to prevent ATP hydrolysis.</text>
</comment>
<comment type="similarity">
    <text evidence="1">Belongs to the adenylate kinase family.</text>
</comment>
<sequence>MRIILLGPPGAGKGTQAQLICKRYNIPQISTGDMLRAAIREGTELGLKAKSVMESGGLVSDELIIGLVKERIAQPDCVNGCIFDGFPRTIPQAEALEKEGISIDHVIEIDVPDEEIVKRLSGRRQHPASGRVYHVVYNPPKVEGKDDETGEDLVQRPDDQEETIRKRLASYHTETEQLVGFYQGRAASGENAPTYDKLDGLRTIEDVQKDLFNILDK</sequence>
<protein>
    <recommendedName>
        <fullName evidence="1">Adenylate kinase</fullName>
        <shortName evidence="1">AK</shortName>
        <ecNumber evidence="1">2.7.4.3</ecNumber>
    </recommendedName>
    <alternativeName>
        <fullName evidence="1">ATP-AMP transphosphorylase</fullName>
    </alternativeName>
    <alternativeName>
        <fullName evidence="1">ATP:AMP phosphotransferase</fullName>
    </alternativeName>
    <alternativeName>
        <fullName evidence="1">Adenylate monophosphate kinase</fullName>
    </alternativeName>
</protein>
<accession>B0VSA9</accession>